<dbReference type="EMBL" id="BX950851">
    <property type="protein sequence ID" value="CAG76267.1"/>
    <property type="molecule type" value="Genomic_DNA"/>
</dbReference>
<dbReference type="RefSeq" id="WP_011094881.1">
    <property type="nucleotide sequence ID" value="NC_004547.2"/>
</dbReference>
<dbReference type="SMR" id="Q6D1S8"/>
<dbReference type="STRING" id="218491.ECA3369"/>
<dbReference type="GeneID" id="57210068"/>
<dbReference type="KEGG" id="eca:ECA3369"/>
<dbReference type="PATRIC" id="fig|218491.5.peg.3423"/>
<dbReference type="eggNOG" id="COG0468">
    <property type="taxonomic scope" value="Bacteria"/>
</dbReference>
<dbReference type="HOGENOM" id="CLU_040469_3_2_6"/>
<dbReference type="OrthoDB" id="9776733at2"/>
<dbReference type="Proteomes" id="UP000007966">
    <property type="component" value="Chromosome"/>
</dbReference>
<dbReference type="GO" id="GO:0005829">
    <property type="term" value="C:cytosol"/>
    <property type="evidence" value="ECO:0007669"/>
    <property type="project" value="TreeGrafter"/>
</dbReference>
<dbReference type="GO" id="GO:0005524">
    <property type="term" value="F:ATP binding"/>
    <property type="evidence" value="ECO:0007669"/>
    <property type="project" value="UniProtKB-UniRule"/>
</dbReference>
<dbReference type="GO" id="GO:0016887">
    <property type="term" value="F:ATP hydrolysis activity"/>
    <property type="evidence" value="ECO:0007669"/>
    <property type="project" value="InterPro"/>
</dbReference>
<dbReference type="GO" id="GO:0140664">
    <property type="term" value="F:ATP-dependent DNA damage sensor activity"/>
    <property type="evidence" value="ECO:0007669"/>
    <property type="project" value="InterPro"/>
</dbReference>
<dbReference type="GO" id="GO:0003684">
    <property type="term" value="F:damaged DNA binding"/>
    <property type="evidence" value="ECO:0007669"/>
    <property type="project" value="UniProtKB-UniRule"/>
</dbReference>
<dbReference type="GO" id="GO:0003697">
    <property type="term" value="F:single-stranded DNA binding"/>
    <property type="evidence" value="ECO:0007669"/>
    <property type="project" value="UniProtKB-UniRule"/>
</dbReference>
<dbReference type="GO" id="GO:0006310">
    <property type="term" value="P:DNA recombination"/>
    <property type="evidence" value="ECO:0007669"/>
    <property type="project" value="UniProtKB-UniRule"/>
</dbReference>
<dbReference type="GO" id="GO:0006281">
    <property type="term" value="P:DNA repair"/>
    <property type="evidence" value="ECO:0007669"/>
    <property type="project" value="UniProtKB-UniRule"/>
</dbReference>
<dbReference type="GO" id="GO:0009432">
    <property type="term" value="P:SOS response"/>
    <property type="evidence" value="ECO:0007669"/>
    <property type="project" value="UniProtKB-UniRule"/>
</dbReference>
<dbReference type="CDD" id="cd00983">
    <property type="entry name" value="RecA"/>
    <property type="match status" value="1"/>
</dbReference>
<dbReference type="FunFam" id="3.40.50.300:FF:000087">
    <property type="entry name" value="Recombinase RecA"/>
    <property type="match status" value="1"/>
</dbReference>
<dbReference type="Gene3D" id="3.40.50.300">
    <property type="entry name" value="P-loop containing nucleotide triphosphate hydrolases"/>
    <property type="match status" value="1"/>
</dbReference>
<dbReference type="HAMAP" id="MF_00268">
    <property type="entry name" value="RecA"/>
    <property type="match status" value="1"/>
</dbReference>
<dbReference type="InterPro" id="IPR003593">
    <property type="entry name" value="AAA+_ATPase"/>
</dbReference>
<dbReference type="InterPro" id="IPR013765">
    <property type="entry name" value="DNA_recomb/repair_RecA"/>
</dbReference>
<dbReference type="InterPro" id="IPR020584">
    <property type="entry name" value="DNA_recomb/repair_RecA_CS"/>
</dbReference>
<dbReference type="InterPro" id="IPR027417">
    <property type="entry name" value="P-loop_NTPase"/>
</dbReference>
<dbReference type="InterPro" id="IPR049261">
    <property type="entry name" value="RecA-like_C"/>
</dbReference>
<dbReference type="InterPro" id="IPR049428">
    <property type="entry name" value="RecA-like_N"/>
</dbReference>
<dbReference type="InterPro" id="IPR020588">
    <property type="entry name" value="RecA_ATP-bd"/>
</dbReference>
<dbReference type="InterPro" id="IPR023400">
    <property type="entry name" value="RecA_C_sf"/>
</dbReference>
<dbReference type="InterPro" id="IPR020587">
    <property type="entry name" value="RecA_monomer-monomer_interface"/>
</dbReference>
<dbReference type="NCBIfam" id="TIGR02012">
    <property type="entry name" value="tigrfam_recA"/>
    <property type="match status" value="1"/>
</dbReference>
<dbReference type="PANTHER" id="PTHR45900:SF1">
    <property type="entry name" value="MITOCHONDRIAL DNA REPAIR PROTEIN RECA HOMOLOG-RELATED"/>
    <property type="match status" value="1"/>
</dbReference>
<dbReference type="PANTHER" id="PTHR45900">
    <property type="entry name" value="RECA"/>
    <property type="match status" value="1"/>
</dbReference>
<dbReference type="Pfam" id="PF00154">
    <property type="entry name" value="RecA"/>
    <property type="match status" value="1"/>
</dbReference>
<dbReference type="Pfam" id="PF21096">
    <property type="entry name" value="RecA_C"/>
    <property type="match status" value="1"/>
</dbReference>
<dbReference type="PRINTS" id="PR00142">
    <property type="entry name" value="RECA"/>
</dbReference>
<dbReference type="SMART" id="SM00382">
    <property type="entry name" value="AAA"/>
    <property type="match status" value="1"/>
</dbReference>
<dbReference type="SUPFAM" id="SSF52540">
    <property type="entry name" value="P-loop containing nucleoside triphosphate hydrolases"/>
    <property type="match status" value="1"/>
</dbReference>
<dbReference type="SUPFAM" id="SSF54752">
    <property type="entry name" value="RecA protein, C-terminal domain"/>
    <property type="match status" value="1"/>
</dbReference>
<dbReference type="PROSITE" id="PS00321">
    <property type="entry name" value="RECA_1"/>
    <property type="match status" value="1"/>
</dbReference>
<dbReference type="PROSITE" id="PS50162">
    <property type="entry name" value="RECA_2"/>
    <property type="match status" value="1"/>
</dbReference>
<dbReference type="PROSITE" id="PS50163">
    <property type="entry name" value="RECA_3"/>
    <property type="match status" value="1"/>
</dbReference>
<feature type="chain" id="PRO_0000122715" description="Protein RecA">
    <location>
        <begin position="1"/>
        <end position="357"/>
    </location>
</feature>
<feature type="region of interest" description="Disordered" evidence="2">
    <location>
        <begin position="334"/>
        <end position="357"/>
    </location>
</feature>
<feature type="binding site" evidence="1">
    <location>
        <begin position="67"/>
        <end position="74"/>
    </location>
    <ligand>
        <name>ATP</name>
        <dbReference type="ChEBI" id="CHEBI:30616"/>
    </ligand>
</feature>
<reference key="1">
    <citation type="journal article" date="2004" name="Proc. Natl. Acad. Sci. U.S.A.">
        <title>Genome sequence of the enterobacterial phytopathogen Erwinia carotovora subsp. atroseptica and characterization of virulence factors.</title>
        <authorList>
            <person name="Bell K.S."/>
            <person name="Sebaihia M."/>
            <person name="Pritchard L."/>
            <person name="Holden M.T.G."/>
            <person name="Hyman L.J."/>
            <person name="Holeva M.C."/>
            <person name="Thomson N.R."/>
            <person name="Bentley S.D."/>
            <person name="Churcher L.J.C."/>
            <person name="Mungall K."/>
            <person name="Atkin R."/>
            <person name="Bason N."/>
            <person name="Brooks K."/>
            <person name="Chillingworth T."/>
            <person name="Clark K."/>
            <person name="Doggett J."/>
            <person name="Fraser A."/>
            <person name="Hance Z."/>
            <person name="Hauser H."/>
            <person name="Jagels K."/>
            <person name="Moule S."/>
            <person name="Norbertczak H."/>
            <person name="Ormond D."/>
            <person name="Price C."/>
            <person name="Quail M.A."/>
            <person name="Sanders M."/>
            <person name="Walker D."/>
            <person name="Whitehead S."/>
            <person name="Salmond G.P.C."/>
            <person name="Birch P.R.J."/>
            <person name="Parkhill J."/>
            <person name="Toth I.K."/>
        </authorList>
    </citation>
    <scope>NUCLEOTIDE SEQUENCE [LARGE SCALE GENOMIC DNA]</scope>
    <source>
        <strain>SCRI 1043 / ATCC BAA-672</strain>
    </source>
</reference>
<sequence>MAIDENKQKALAAALGQIEKQFGKGSIMRLGEDRSMDVETISTGSLSLDIALGAGGLPMGRIVEIYGPESSGKTTLTLQVIAAAQREGKTCAFIDAEHALDPIYAKKLGVDIDNLLCSQPDTGEQALEICDALTRSGAVDVIIVDSVAALTPKAEIEGEIGDSHMGLAARMMSQAMRKLAGNLKQANTLLIFINQIRMKIGVMFGNPETTTGGNALKFYASVRLDIRRTGAIKEGEEVVGSETRVKVVKNKVAAPFKQAEFQILYGEGINIHGELVDLGVKHKLIEKAGAWYSYNGDKIGQGKANACNFLKENPTISAELDKKLREMLLHKGNELKPAAAGNSHDEDELAGEGKEEF</sequence>
<proteinExistence type="inferred from homology"/>
<keyword id="KW-0067">ATP-binding</keyword>
<keyword id="KW-0963">Cytoplasm</keyword>
<keyword id="KW-0227">DNA damage</keyword>
<keyword id="KW-0233">DNA recombination</keyword>
<keyword id="KW-0234">DNA repair</keyword>
<keyword id="KW-0238">DNA-binding</keyword>
<keyword id="KW-0547">Nucleotide-binding</keyword>
<keyword id="KW-1185">Reference proteome</keyword>
<keyword id="KW-0742">SOS response</keyword>
<comment type="function">
    <text evidence="1">Can catalyze the hydrolysis of ATP in the presence of single-stranded DNA, the ATP-dependent uptake of single-stranded DNA by duplex DNA, and the ATP-dependent hybridization of homologous single-stranded DNAs. It interacts with LexA causing its activation and leading to its autocatalytic cleavage.</text>
</comment>
<comment type="subcellular location">
    <subcellularLocation>
        <location evidence="1">Cytoplasm</location>
    </subcellularLocation>
</comment>
<comment type="similarity">
    <text evidence="1">Belongs to the RecA family.</text>
</comment>
<accession>Q6D1S8</accession>
<evidence type="ECO:0000255" key="1">
    <source>
        <dbReference type="HAMAP-Rule" id="MF_00268"/>
    </source>
</evidence>
<evidence type="ECO:0000256" key="2">
    <source>
        <dbReference type="SAM" id="MobiDB-lite"/>
    </source>
</evidence>
<gene>
    <name evidence="1" type="primary">recA</name>
    <name type="ordered locus">ECA3369</name>
</gene>
<name>RECA_PECAS</name>
<organism>
    <name type="scientific">Pectobacterium atrosepticum (strain SCRI 1043 / ATCC BAA-672)</name>
    <name type="common">Erwinia carotovora subsp. atroseptica</name>
    <dbReference type="NCBI Taxonomy" id="218491"/>
    <lineage>
        <taxon>Bacteria</taxon>
        <taxon>Pseudomonadati</taxon>
        <taxon>Pseudomonadota</taxon>
        <taxon>Gammaproteobacteria</taxon>
        <taxon>Enterobacterales</taxon>
        <taxon>Pectobacteriaceae</taxon>
        <taxon>Pectobacterium</taxon>
    </lineage>
</organism>
<protein>
    <recommendedName>
        <fullName evidence="1">Protein RecA</fullName>
    </recommendedName>
    <alternativeName>
        <fullName evidence="1">Recombinase A</fullName>
    </alternativeName>
</protein>